<proteinExistence type="inferred from homology"/>
<name>PYRH_COREF</name>
<comment type="function">
    <text evidence="1">Catalyzes the reversible phosphorylation of UMP to UDP.</text>
</comment>
<comment type="catalytic activity">
    <reaction evidence="1">
        <text>UMP + ATP = UDP + ADP</text>
        <dbReference type="Rhea" id="RHEA:24400"/>
        <dbReference type="ChEBI" id="CHEBI:30616"/>
        <dbReference type="ChEBI" id="CHEBI:57865"/>
        <dbReference type="ChEBI" id="CHEBI:58223"/>
        <dbReference type="ChEBI" id="CHEBI:456216"/>
        <dbReference type="EC" id="2.7.4.22"/>
    </reaction>
</comment>
<comment type="activity regulation">
    <text evidence="1">Inhibited by UTP.</text>
</comment>
<comment type="pathway">
    <text evidence="1">Pyrimidine metabolism; CTP biosynthesis via de novo pathway; UDP from UMP (UMPK route): step 1/1.</text>
</comment>
<comment type="subunit">
    <text evidence="1">Homohexamer.</text>
</comment>
<comment type="subcellular location">
    <subcellularLocation>
        <location evidence="1">Cytoplasm</location>
    </subcellularLocation>
</comment>
<comment type="similarity">
    <text evidence="1">Belongs to the UMP kinase family.</text>
</comment>
<dbReference type="EC" id="2.7.4.22" evidence="1"/>
<dbReference type="EMBL" id="BA000035">
    <property type="protein sequence ID" value="BAC18721.1"/>
    <property type="molecule type" value="Genomic_DNA"/>
</dbReference>
<dbReference type="RefSeq" id="WP_011075668.1">
    <property type="nucleotide sequence ID" value="NC_004369.1"/>
</dbReference>
<dbReference type="SMR" id="Q8FP74"/>
<dbReference type="STRING" id="196164.gene:10742339"/>
<dbReference type="KEGG" id="cef:CE1911"/>
<dbReference type="eggNOG" id="COG0528">
    <property type="taxonomic scope" value="Bacteria"/>
</dbReference>
<dbReference type="HOGENOM" id="CLU_033861_0_0_11"/>
<dbReference type="OrthoDB" id="9807458at2"/>
<dbReference type="UniPathway" id="UPA00159">
    <property type="reaction ID" value="UER00275"/>
</dbReference>
<dbReference type="Proteomes" id="UP000001409">
    <property type="component" value="Chromosome"/>
</dbReference>
<dbReference type="GO" id="GO:0005737">
    <property type="term" value="C:cytoplasm"/>
    <property type="evidence" value="ECO:0007669"/>
    <property type="project" value="UniProtKB-SubCell"/>
</dbReference>
<dbReference type="GO" id="GO:0005524">
    <property type="term" value="F:ATP binding"/>
    <property type="evidence" value="ECO:0007669"/>
    <property type="project" value="UniProtKB-KW"/>
</dbReference>
<dbReference type="GO" id="GO:0033862">
    <property type="term" value="F:UMP kinase activity"/>
    <property type="evidence" value="ECO:0007669"/>
    <property type="project" value="UniProtKB-EC"/>
</dbReference>
<dbReference type="GO" id="GO:0044210">
    <property type="term" value="P:'de novo' CTP biosynthetic process"/>
    <property type="evidence" value="ECO:0007669"/>
    <property type="project" value="UniProtKB-UniRule"/>
</dbReference>
<dbReference type="GO" id="GO:0006225">
    <property type="term" value="P:UDP biosynthetic process"/>
    <property type="evidence" value="ECO:0007669"/>
    <property type="project" value="TreeGrafter"/>
</dbReference>
<dbReference type="CDD" id="cd04254">
    <property type="entry name" value="AAK_UMPK-PyrH-Ec"/>
    <property type="match status" value="1"/>
</dbReference>
<dbReference type="FunFam" id="3.40.1160.10:FF:000001">
    <property type="entry name" value="Uridylate kinase"/>
    <property type="match status" value="1"/>
</dbReference>
<dbReference type="Gene3D" id="3.40.1160.10">
    <property type="entry name" value="Acetylglutamate kinase-like"/>
    <property type="match status" value="1"/>
</dbReference>
<dbReference type="HAMAP" id="MF_01220_B">
    <property type="entry name" value="PyrH_B"/>
    <property type="match status" value="1"/>
</dbReference>
<dbReference type="InterPro" id="IPR036393">
    <property type="entry name" value="AceGlu_kinase-like_sf"/>
</dbReference>
<dbReference type="InterPro" id="IPR001048">
    <property type="entry name" value="Asp/Glu/Uridylate_kinase"/>
</dbReference>
<dbReference type="InterPro" id="IPR011817">
    <property type="entry name" value="Uridylate_kinase"/>
</dbReference>
<dbReference type="InterPro" id="IPR015963">
    <property type="entry name" value="Uridylate_kinase_bac"/>
</dbReference>
<dbReference type="NCBIfam" id="TIGR02075">
    <property type="entry name" value="pyrH_bact"/>
    <property type="match status" value="1"/>
</dbReference>
<dbReference type="PANTHER" id="PTHR42833">
    <property type="entry name" value="URIDYLATE KINASE"/>
    <property type="match status" value="1"/>
</dbReference>
<dbReference type="PANTHER" id="PTHR42833:SF4">
    <property type="entry name" value="URIDYLATE KINASE PUMPKIN, CHLOROPLASTIC"/>
    <property type="match status" value="1"/>
</dbReference>
<dbReference type="Pfam" id="PF00696">
    <property type="entry name" value="AA_kinase"/>
    <property type="match status" value="1"/>
</dbReference>
<dbReference type="PIRSF" id="PIRSF005650">
    <property type="entry name" value="Uridylate_kin"/>
    <property type="match status" value="1"/>
</dbReference>
<dbReference type="SUPFAM" id="SSF53633">
    <property type="entry name" value="Carbamate kinase-like"/>
    <property type="match status" value="1"/>
</dbReference>
<reference key="1">
    <citation type="journal article" date="2003" name="Genome Res.">
        <title>Comparative complete genome sequence analysis of the amino acid replacements responsible for the thermostability of Corynebacterium efficiens.</title>
        <authorList>
            <person name="Nishio Y."/>
            <person name="Nakamura Y."/>
            <person name="Kawarabayasi Y."/>
            <person name="Usuda Y."/>
            <person name="Kimura E."/>
            <person name="Sugimoto S."/>
            <person name="Matsui K."/>
            <person name="Yamagishi A."/>
            <person name="Kikuchi H."/>
            <person name="Ikeo K."/>
            <person name="Gojobori T."/>
        </authorList>
    </citation>
    <scope>NUCLEOTIDE SEQUENCE [LARGE SCALE GENOMIC DNA]</scope>
    <source>
        <strain>DSM 44549 / YS-314 / AJ 12310 / JCM 11189 / NBRC 100395</strain>
    </source>
</reference>
<gene>
    <name evidence="1" type="primary">pyrH</name>
    <name type="ordered locus">CE1911</name>
</gene>
<accession>Q8FP74</accession>
<sequence length="243" mass="26181">MTTSSIEPRNSYKRVMLKLGGEMFGGGKVGIDPDVVDNVARQIAEVAKSGAEIAVVIGGGNFFRGAELQQRGMDRARSDYMGMLGTVMNCLALQDFLGQHGVECRVQTAINMAQVAEPYLPLRAERHLEKGRVVIFGAGMGMPYFSTDTTAAQRALEIGCDVLLMAKAVDGVYSADPRTNPDAELFTEITPKEVIEKSLKVADATAFSLCMDNNMPILVFNLLTDGNIARAVNGERIGTLVQS</sequence>
<protein>
    <recommendedName>
        <fullName evidence="1">Uridylate kinase</fullName>
        <shortName evidence="1">UK</shortName>
        <ecNumber evidence="1">2.7.4.22</ecNumber>
    </recommendedName>
    <alternativeName>
        <fullName evidence="1">Uridine monophosphate kinase</fullName>
        <shortName evidence="1">UMP kinase</shortName>
        <shortName evidence="1">UMPK</shortName>
    </alternativeName>
</protein>
<keyword id="KW-0067">ATP-binding</keyword>
<keyword id="KW-0963">Cytoplasm</keyword>
<keyword id="KW-0418">Kinase</keyword>
<keyword id="KW-0547">Nucleotide-binding</keyword>
<keyword id="KW-0665">Pyrimidine biosynthesis</keyword>
<keyword id="KW-1185">Reference proteome</keyword>
<keyword id="KW-0808">Transferase</keyword>
<evidence type="ECO:0000255" key="1">
    <source>
        <dbReference type="HAMAP-Rule" id="MF_01220"/>
    </source>
</evidence>
<organism>
    <name type="scientific">Corynebacterium efficiens (strain DSM 44549 / YS-314 / AJ 12310 / JCM 11189 / NBRC 100395)</name>
    <dbReference type="NCBI Taxonomy" id="196164"/>
    <lineage>
        <taxon>Bacteria</taxon>
        <taxon>Bacillati</taxon>
        <taxon>Actinomycetota</taxon>
        <taxon>Actinomycetes</taxon>
        <taxon>Mycobacteriales</taxon>
        <taxon>Corynebacteriaceae</taxon>
        <taxon>Corynebacterium</taxon>
    </lineage>
</organism>
<feature type="chain" id="PRO_1000053919" description="Uridylate kinase">
    <location>
        <begin position="1"/>
        <end position="243"/>
    </location>
</feature>
<feature type="binding site" evidence="1">
    <location>
        <begin position="18"/>
        <end position="21"/>
    </location>
    <ligand>
        <name>ATP</name>
        <dbReference type="ChEBI" id="CHEBI:30616"/>
    </ligand>
</feature>
<feature type="binding site" evidence="1">
    <location>
        <position position="59"/>
    </location>
    <ligand>
        <name>UMP</name>
        <dbReference type="ChEBI" id="CHEBI:57865"/>
    </ligand>
</feature>
<feature type="binding site" evidence="1">
    <location>
        <position position="60"/>
    </location>
    <ligand>
        <name>ATP</name>
        <dbReference type="ChEBI" id="CHEBI:30616"/>
    </ligand>
</feature>
<feature type="binding site" evidence="1">
    <location>
        <position position="64"/>
    </location>
    <ligand>
        <name>ATP</name>
        <dbReference type="ChEBI" id="CHEBI:30616"/>
    </ligand>
</feature>
<feature type="binding site" evidence="1">
    <location>
        <position position="79"/>
    </location>
    <ligand>
        <name>UMP</name>
        <dbReference type="ChEBI" id="CHEBI:57865"/>
    </ligand>
</feature>
<feature type="binding site" evidence="1">
    <location>
        <begin position="140"/>
        <end position="147"/>
    </location>
    <ligand>
        <name>UMP</name>
        <dbReference type="ChEBI" id="CHEBI:57865"/>
    </ligand>
</feature>
<feature type="binding site" evidence="1">
    <location>
        <position position="173"/>
    </location>
    <ligand>
        <name>ATP</name>
        <dbReference type="ChEBI" id="CHEBI:30616"/>
    </ligand>
</feature>
<feature type="binding site" evidence="1">
    <location>
        <position position="176"/>
    </location>
    <ligand>
        <name>ATP</name>
        <dbReference type="ChEBI" id="CHEBI:30616"/>
    </ligand>
</feature>